<name>ADD_ECO57</name>
<gene>
    <name evidence="1" type="primary">add</name>
    <name type="ordered locus">Z2628</name>
    <name type="ordered locus">ECs2331</name>
</gene>
<accession>Q8X661</accession>
<protein>
    <recommendedName>
        <fullName evidence="1">Adenosine deaminase</fullName>
        <ecNumber evidence="1">3.5.4.4</ecNumber>
    </recommendedName>
    <alternativeName>
        <fullName evidence="1">Adenosine aminohydrolase</fullName>
    </alternativeName>
</protein>
<comment type="function">
    <text evidence="1">Catalyzes the hydrolytic deamination of adenosine and 2-deoxyadenosine.</text>
</comment>
<comment type="catalytic activity">
    <reaction evidence="1">
        <text>adenosine + H2O + H(+) = inosine + NH4(+)</text>
        <dbReference type="Rhea" id="RHEA:24408"/>
        <dbReference type="ChEBI" id="CHEBI:15377"/>
        <dbReference type="ChEBI" id="CHEBI:15378"/>
        <dbReference type="ChEBI" id="CHEBI:16335"/>
        <dbReference type="ChEBI" id="CHEBI:17596"/>
        <dbReference type="ChEBI" id="CHEBI:28938"/>
        <dbReference type="EC" id="3.5.4.4"/>
    </reaction>
    <physiologicalReaction direction="left-to-right" evidence="1">
        <dbReference type="Rhea" id="RHEA:24409"/>
    </physiologicalReaction>
</comment>
<comment type="catalytic activity">
    <reaction evidence="1">
        <text>2'-deoxyadenosine + H2O + H(+) = 2'-deoxyinosine + NH4(+)</text>
        <dbReference type="Rhea" id="RHEA:28190"/>
        <dbReference type="ChEBI" id="CHEBI:15377"/>
        <dbReference type="ChEBI" id="CHEBI:15378"/>
        <dbReference type="ChEBI" id="CHEBI:17256"/>
        <dbReference type="ChEBI" id="CHEBI:28938"/>
        <dbReference type="ChEBI" id="CHEBI:28997"/>
        <dbReference type="EC" id="3.5.4.4"/>
    </reaction>
    <physiologicalReaction direction="left-to-right" evidence="1">
        <dbReference type="Rhea" id="RHEA:28191"/>
    </physiologicalReaction>
</comment>
<comment type="cofactor">
    <cofactor evidence="1">
        <name>Zn(2+)</name>
        <dbReference type="ChEBI" id="CHEBI:29105"/>
    </cofactor>
    <text evidence="1">Binds 1 zinc ion per subunit.</text>
</comment>
<comment type="similarity">
    <text evidence="1">Belongs to the metallo-dependent hydrolases superfamily. Adenosine and AMP deaminases family. Adenosine deaminase subfamily.</text>
</comment>
<evidence type="ECO:0000255" key="1">
    <source>
        <dbReference type="HAMAP-Rule" id="MF_00540"/>
    </source>
</evidence>
<reference key="1">
    <citation type="journal article" date="2001" name="Nature">
        <title>Genome sequence of enterohaemorrhagic Escherichia coli O157:H7.</title>
        <authorList>
            <person name="Perna N.T."/>
            <person name="Plunkett G. III"/>
            <person name="Burland V."/>
            <person name="Mau B."/>
            <person name="Glasner J.D."/>
            <person name="Rose D.J."/>
            <person name="Mayhew G.F."/>
            <person name="Evans P.S."/>
            <person name="Gregor J."/>
            <person name="Kirkpatrick H.A."/>
            <person name="Posfai G."/>
            <person name="Hackett J."/>
            <person name="Klink S."/>
            <person name="Boutin A."/>
            <person name="Shao Y."/>
            <person name="Miller L."/>
            <person name="Grotbeck E.J."/>
            <person name="Davis N.W."/>
            <person name="Lim A."/>
            <person name="Dimalanta E.T."/>
            <person name="Potamousis K."/>
            <person name="Apodaca J."/>
            <person name="Anantharaman T.S."/>
            <person name="Lin J."/>
            <person name="Yen G."/>
            <person name="Schwartz D.C."/>
            <person name="Welch R.A."/>
            <person name="Blattner F.R."/>
        </authorList>
    </citation>
    <scope>NUCLEOTIDE SEQUENCE [LARGE SCALE GENOMIC DNA]</scope>
    <source>
        <strain>O157:H7 / EDL933 / ATCC 700927 / EHEC</strain>
    </source>
</reference>
<reference key="2">
    <citation type="journal article" date="2001" name="DNA Res.">
        <title>Complete genome sequence of enterohemorrhagic Escherichia coli O157:H7 and genomic comparison with a laboratory strain K-12.</title>
        <authorList>
            <person name="Hayashi T."/>
            <person name="Makino K."/>
            <person name="Ohnishi M."/>
            <person name="Kurokawa K."/>
            <person name="Ishii K."/>
            <person name="Yokoyama K."/>
            <person name="Han C.-G."/>
            <person name="Ohtsubo E."/>
            <person name="Nakayama K."/>
            <person name="Murata T."/>
            <person name="Tanaka M."/>
            <person name="Tobe T."/>
            <person name="Iida T."/>
            <person name="Takami H."/>
            <person name="Honda T."/>
            <person name="Sasakawa C."/>
            <person name="Ogasawara N."/>
            <person name="Yasunaga T."/>
            <person name="Kuhara S."/>
            <person name="Shiba T."/>
            <person name="Hattori M."/>
            <person name="Shinagawa H."/>
        </authorList>
    </citation>
    <scope>NUCLEOTIDE SEQUENCE [LARGE SCALE GENOMIC DNA]</scope>
    <source>
        <strain>O157:H7 / Sakai / RIMD 0509952 / EHEC</strain>
    </source>
</reference>
<sequence>MIDTTLPLTDIHRHLDGNIRPQTILELGRQYNISLPAQSLETLIPHVQVIANEPDLVSFLTKLDWGVKVLASLDACRRVAFENIEDAARNGLHYVELRFSPGYMAMAHQLPVAGVVEAVIDGVREGCRTFGVQAKLIGIMSRTFGEAACQQELEAFLAHRDQITALDLAGDELGFPGSLFLSHFNRARDAGWHITVHAGEAAGPESIWQAIRELGAERIGHGVKAIEDRALMDFLAEQQIGIESCLTSNIQTSTVAELAAHPLKTFLEHGIRASINTDDPGVQGVDIIHEYTVAAPAAGLSREQIRQAQINGLEMAFLNAEEKRALREKVAAK</sequence>
<proteinExistence type="inferred from homology"/>
<dbReference type="EC" id="3.5.4.4" evidence="1"/>
<dbReference type="EMBL" id="AE005174">
    <property type="protein sequence ID" value="AAG56612.1"/>
    <property type="molecule type" value="Genomic_DNA"/>
</dbReference>
<dbReference type="EMBL" id="BA000007">
    <property type="protein sequence ID" value="BAB35754.1"/>
    <property type="molecule type" value="Genomic_DNA"/>
</dbReference>
<dbReference type="PIR" id="C90920">
    <property type="entry name" value="C90920"/>
</dbReference>
<dbReference type="PIR" id="H85768">
    <property type="entry name" value="H85768"/>
</dbReference>
<dbReference type="RefSeq" id="NP_310358.1">
    <property type="nucleotide sequence ID" value="NC_002695.1"/>
</dbReference>
<dbReference type="RefSeq" id="WP_000567512.1">
    <property type="nucleotide sequence ID" value="NZ_VOAI01000007.1"/>
</dbReference>
<dbReference type="SMR" id="Q8X661"/>
<dbReference type="STRING" id="155864.Z2628"/>
<dbReference type="GeneID" id="913624"/>
<dbReference type="KEGG" id="ece:Z2628"/>
<dbReference type="KEGG" id="ecs:ECs_2331"/>
<dbReference type="PATRIC" id="fig|386585.9.peg.2441"/>
<dbReference type="eggNOG" id="COG1816">
    <property type="taxonomic scope" value="Bacteria"/>
</dbReference>
<dbReference type="HOGENOM" id="CLU_039228_0_2_6"/>
<dbReference type="OMA" id="NHFTIHA"/>
<dbReference type="Proteomes" id="UP000000558">
    <property type="component" value="Chromosome"/>
</dbReference>
<dbReference type="Proteomes" id="UP000002519">
    <property type="component" value="Chromosome"/>
</dbReference>
<dbReference type="GO" id="GO:0005829">
    <property type="term" value="C:cytosol"/>
    <property type="evidence" value="ECO:0007669"/>
    <property type="project" value="TreeGrafter"/>
</dbReference>
<dbReference type="GO" id="GO:0046936">
    <property type="term" value="F:2'-deoxyadenosine deaminase activity"/>
    <property type="evidence" value="ECO:0007669"/>
    <property type="project" value="RHEA"/>
</dbReference>
<dbReference type="GO" id="GO:0004000">
    <property type="term" value="F:adenosine deaminase activity"/>
    <property type="evidence" value="ECO:0007669"/>
    <property type="project" value="UniProtKB-UniRule"/>
</dbReference>
<dbReference type="GO" id="GO:0008270">
    <property type="term" value="F:zinc ion binding"/>
    <property type="evidence" value="ECO:0007669"/>
    <property type="project" value="UniProtKB-UniRule"/>
</dbReference>
<dbReference type="GO" id="GO:0006154">
    <property type="term" value="P:adenosine catabolic process"/>
    <property type="evidence" value="ECO:0007669"/>
    <property type="project" value="TreeGrafter"/>
</dbReference>
<dbReference type="GO" id="GO:0043103">
    <property type="term" value="P:hypoxanthine salvage"/>
    <property type="evidence" value="ECO:0007669"/>
    <property type="project" value="TreeGrafter"/>
</dbReference>
<dbReference type="GO" id="GO:0046103">
    <property type="term" value="P:inosine biosynthetic process"/>
    <property type="evidence" value="ECO:0007669"/>
    <property type="project" value="TreeGrafter"/>
</dbReference>
<dbReference type="GO" id="GO:0009117">
    <property type="term" value="P:nucleotide metabolic process"/>
    <property type="evidence" value="ECO:0007669"/>
    <property type="project" value="UniProtKB-KW"/>
</dbReference>
<dbReference type="GO" id="GO:0009168">
    <property type="term" value="P:purine ribonucleoside monophosphate biosynthetic process"/>
    <property type="evidence" value="ECO:0007669"/>
    <property type="project" value="UniProtKB-UniRule"/>
</dbReference>
<dbReference type="CDD" id="cd01320">
    <property type="entry name" value="ADA"/>
    <property type="match status" value="1"/>
</dbReference>
<dbReference type="FunFam" id="3.20.20.140:FF:000009">
    <property type="entry name" value="Adenosine deaminase"/>
    <property type="match status" value="1"/>
</dbReference>
<dbReference type="Gene3D" id="3.20.20.140">
    <property type="entry name" value="Metal-dependent hydrolases"/>
    <property type="match status" value="1"/>
</dbReference>
<dbReference type="HAMAP" id="MF_00540">
    <property type="entry name" value="A_deaminase"/>
    <property type="match status" value="1"/>
</dbReference>
<dbReference type="InterPro" id="IPR006650">
    <property type="entry name" value="A/AMP_deam_AS"/>
</dbReference>
<dbReference type="InterPro" id="IPR028893">
    <property type="entry name" value="A_deaminase"/>
</dbReference>
<dbReference type="InterPro" id="IPR001365">
    <property type="entry name" value="A_deaminase_dom"/>
</dbReference>
<dbReference type="InterPro" id="IPR006330">
    <property type="entry name" value="Ado/ade_deaminase"/>
</dbReference>
<dbReference type="InterPro" id="IPR032466">
    <property type="entry name" value="Metal_Hydrolase"/>
</dbReference>
<dbReference type="NCBIfam" id="TIGR01430">
    <property type="entry name" value="aden_deam"/>
    <property type="match status" value="1"/>
</dbReference>
<dbReference type="NCBIfam" id="NF006846">
    <property type="entry name" value="PRK09358.1-1"/>
    <property type="match status" value="1"/>
</dbReference>
<dbReference type="PANTHER" id="PTHR11409">
    <property type="entry name" value="ADENOSINE DEAMINASE"/>
    <property type="match status" value="1"/>
</dbReference>
<dbReference type="PANTHER" id="PTHR11409:SF43">
    <property type="entry name" value="ADENOSINE DEAMINASE"/>
    <property type="match status" value="1"/>
</dbReference>
<dbReference type="Pfam" id="PF00962">
    <property type="entry name" value="A_deaminase"/>
    <property type="match status" value="1"/>
</dbReference>
<dbReference type="SUPFAM" id="SSF51556">
    <property type="entry name" value="Metallo-dependent hydrolases"/>
    <property type="match status" value="1"/>
</dbReference>
<dbReference type="PROSITE" id="PS00485">
    <property type="entry name" value="A_DEAMINASE"/>
    <property type="match status" value="1"/>
</dbReference>
<keyword id="KW-0378">Hydrolase</keyword>
<keyword id="KW-0479">Metal-binding</keyword>
<keyword id="KW-0546">Nucleotide metabolism</keyword>
<keyword id="KW-1185">Reference proteome</keyword>
<keyword id="KW-0862">Zinc</keyword>
<feature type="chain" id="PRO_0000194369" description="Adenosine deaminase">
    <location>
        <begin position="1"/>
        <end position="333"/>
    </location>
</feature>
<feature type="active site" description="Proton donor" evidence="1">
    <location>
        <position position="200"/>
    </location>
</feature>
<feature type="binding site" evidence="1">
    <location>
        <position position="12"/>
    </location>
    <ligand>
        <name>Zn(2+)</name>
        <dbReference type="ChEBI" id="CHEBI:29105"/>
        <note>catalytic</note>
    </ligand>
</feature>
<feature type="binding site" evidence="1">
    <location>
        <position position="14"/>
    </location>
    <ligand>
        <name>substrate</name>
    </ligand>
</feature>
<feature type="binding site" evidence="1">
    <location>
        <position position="14"/>
    </location>
    <ligand>
        <name>Zn(2+)</name>
        <dbReference type="ChEBI" id="CHEBI:29105"/>
        <note>catalytic</note>
    </ligand>
</feature>
<feature type="binding site" evidence="1">
    <location>
        <position position="16"/>
    </location>
    <ligand>
        <name>substrate</name>
    </ligand>
</feature>
<feature type="binding site" evidence="1">
    <location>
        <position position="170"/>
    </location>
    <ligand>
        <name>substrate</name>
    </ligand>
</feature>
<feature type="binding site" evidence="1">
    <location>
        <position position="197"/>
    </location>
    <ligand>
        <name>Zn(2+)</name>
        <dbReference type="ChEBI" id="CHEBI:29105"/>
        <note>catalytic</note>
    </ligand>
</feature>
<feature type="binding site" evidence="1">
    <location>
        <position position="278"/>
    </location>
    <ligand>
        <name>Zn(2+)</name>
        <dbReference type="ChEBI" id="CHEBI:29105"/>
        <note>catalytic</note>
    </ligand>
</feature>
<feature type="binding site" evidence="1">
    <location>
        <position position="279"/>
    </location>
    <ligand>
        <name>substrate</name>
    </ligand>
</feature>
<feature type="site" description="Important for catalytic activity" evidence="1">
    <location>
        <position position="221"/>
    </location>
</feature>
<organism>
    <name type="scientific">Escherichia coli O157:H7</name>
    <dbReference type="NCBI Taxonomy" id="83334"/>
    <lineage>
        <taxon>Bacteria</taxon>
        <taxon>Pseudomonadati</taxon>
        <taxon>Pseudomonadota</taxon>
        <taxon>Gammaproteobacteria</taxon>
        <taxon>Enterobacterales</taxon>
        <taxon>Enterobacteriaceae</taxon>
        <taxon>Escherichia</taxon>
    </lineage>
</organism>